<gene>
    <name type="ordered locus">VS_II0189</name>
</gene>
<dbReference type="EMBL" id="FM954973">
    <property type="protein sequence ID" value="CAV25513.1"/>
    <property type="status" value="ALT_INIT"/>
    <property type="molecule type" value="Genomic_DNA"/>
</dbReference>
<dbReference type="STRING" id="575788.VS_II0189"/>
<dbReference type="KEGG" id="vsp:VS_II0189"/>
<dbReference type="eggNOG" id="COG4720">
    <property type="taxonomic scope" value="Bacteria"/>
</dbReference>
<dbReference type="HOGENOM" id="CLU_120023_0_0_6"/>
<dbReference type="Proteomes" id="UP000009100">
    <property type="component" value="Chromosome 2"/>
</dbReference>
<dbReference type="GO" id="GO:0005886">
    <property type="term" value="C:plasma membrane"/>
    <property type="evidence" value="ECO:0007669"/>
    <property type="project" value="UniProtKB-SubCell"/>
</dbReference>
<dbReference type="Gene3D" id="1.10.1760.20">
    <property type="match status" value="1"/>
</dbReference>
<dbReference type="HAMAP" id="MF_01572">
    <property type="entry name" value="UPF0397"/>
    <property type="match status" value="1"/>
</dbReference>
<dbReference type="InterPro" id="IPR009825">
    <property type="entry name" value="ECF_substrate-spec-like"/>
</dbReference>
<dbReference type="InterPro" id="IPR022914">
    <property type="entry name" value="UPF0397"/>
</dbReference>
<dbReference type="NCBIfam" id="NF010182">
    <property type="entry name" value="PRK13661.1"/>
    <property type="match status" value="1"/>
</dbReference>
<dbReference type="PANTHER" id="PTHR37815">
    <property type="entry name" value="UPF0397 PROTEIN BC_2624-RELATED"/>
    <property type="match status" value="1"/>
</dbReference>
<dbReference type="PANTHER" id="PTHR37815:SF3">
    <property type="entry name" value="UPF0397 PROTEIN SPR0429"/>
    <property type="match status" value="1"/>
</dbReference>
<dbReference type="Pfam" id="PF07155">
    <property type="entry name" value="ECF-ribofla_trS"/>
    <property type="match status" value="1"/>
</dbReference>
<accession>B7VQF8</accession>
<name>Y3389_VIBA3</name>
<protein>
    <recommendedName>
        <fullName evidence="1">UPF0397 protein VS_II0189</fullName>
    </recommendedName>
</protein>
<evidence type="ECO:0000255" key="1">
    <source>
        <dbReference type="HAMAP-Rule" id="MF_01572"/>
    </source>
</evidence>
<evidence type="ECO:0000305" key="2"/>
<keyword id="KW-1003">Cell membrane</keyword>
<keyword id="KW-0472">Membrane</keyword>
<keyword id="KW-0812">Transmembrane</keyword>
<keyword id="KW-1133">Transmembrane helix</keyword>
<proteinExistence type="inferred from homology"/>
<comment type="subcellular location">
    <subcellularLocation>
        <location evidence="1">Cell membrane</location>
        <topology evidence="1">Multi-pass membrane protein</topology>
    </subcellularLocation>
</comment>
<comment type="similarity">
    <text evidence="1">Belongs to the UPF0397 family.</text>
</comment>
<comment type="sequence caution" evidence="2">
    <conflict type="erroneous initiation">
        <sequence resource="EMBL-CDS" id="CAV25513"/>
    </conflict>
</comment>
<feature type="chain" id="PRO_0000382540" description="UPF0397 protein VS_II0189">
    <location>
        <begin position="1"/>
        <end position="182"/>
    </location>
</feature>
<feature type="transmembrane region" description="Helical" evidence="1">
    <location>
        <begin position="8"/>
        <end position="28"/>
    </location>
</feature>
<feature type="transmembrane region" description="Helical" evidence="1">
    <location>
        <begin position="41"/>
        <end position="61"/>
    </location>
</feature>
<feature type="transmembrane region" description="Helical" evidence="1">
    <location>
        <begin position="72"/>
        <end position="92"/>
    </location>
</feature>
<feature type="transmembrane region" description="Helical" evidence="1">
    <location>
        <begin position="110"/>
        <end position="130"/>
    </location>
</feature>
<feature type="transmembrane region" description="Helical" evidence="1">
    <location>
        <begin position="146"/>
        <end position="166"/>
    </location>
</feature>
<organism>
    <name type="scientific">Vibrio atlanticus (strain LGP32)</name>
    <name type="common">Vibrio splendidus (strain Mel32)</name>
    <dbReference type="NCBI Taxonomy" id="575788"/>
    <lineage>
        <taxon>Bacteria</taxon>
        <taxon>Pseudomonadati</taxon>
        <taxon>Pseudomonadota</taxon>
        <taxon>Gammaproteobacteria</taxon>
        <taxon>Vibrionales</taxon>
        <taxon>Vibrionaceae</taxon>
        <taxon>Vibrio</taxon>
    </lineage>
</organism>
<sequence length="182" mass="19345">MNFSAKTVVVIAIGAALYGIGGLPMFGVPVFANTTLKPAMAVLALFSVLFGPIVGFLVGFIGHWVTDLFAGWGVWLTWVLGSGIVGMVIGLFPMMTKNRLQQGELPMKDFALFVVLALAGNVVGYGSSAFLDTILYAEPFTKVFTQLSIIAAGNTILIAVVGFLILKSVAKRNKQSRNLTEA</sequence>
<reference key="1">
    <citation type="submission" date="2009-02" db="EMBL/GenBank/DDBJ databases">
        <title>Vibrio splendidus str. LGP32 complete genome.</title>
        <authorList>
            <person name="Mazel D."/>
            <person name="Le Roux F."/>
        </authorList>
    </citation>
    <scope>NUCLEOTIDE SEQUENCE [LARGE SCALE GENOMIC DNA]</scope>
    <source>
        <strain>LGP32</strain>
    </source>
</reference>